<protein>
    <recommendedName>
        <fullName evidence="1">Protein SprT-like</fullName>
    </recommendedName>
</protein>
<reference key="1">
    <citation type="journal article" date="2001" name="Science">
        <title>Comparative genomics of Listeria species.</title>
        <authorList>
            <person name="Glaser P."/>
            <person name="Frangeul L."/>
            <person name="Buchrieser C."/>
            <person name="Rusniok C."/>
            <person name="Amend A."/>
            <person name="Baquero F."/>
            <person name="Berche P."/>
            <person name="Bloecker H."/>
            <person name="Brandt P."/>
            <person name="Chakraborty T."/>
            <person name="Charbit A."/>
            <person name="Chetouani F."/>
            <person name="Couve E."/>
            <person name="de Daruvar A."/>
            <person name="Dehoux P."/>
            <person name="Domann E."/>
            <person name="Dominguez-Bernal G."/>
            <person name="Duchaud E."/>
            <person name="Durant L."/>
            <person name="Dussurget O."/>
            <person name="Entian K.-D."/>
            <person name="Fsihi H."/>
            <person name="Garcia-del Portillo F."/>
            <person name="Garrido P."/>
            <person name="Gautier L."/>
            <person name="Goebel W."/>
            <person name="Gomez-Lopez N."/>
            <person name="Hain T."/>
            <person name="Hauf J."/>
            <person name="Jackson D."/>
            <person name="Jones L.-M."/>
            <person name="Kaerst U."/>
            <person name="Kreft J."/>
            <person name="Kuhn M."/>
            <person name="Kunst F."/>
            <person name="Kurapkat G."/>
            <person name="Madueno E."/>
            <person name="Maitournam A."/>
            <person name="Mata Vicente J."/>
            <person name="Ng E."/>
            <person name="Nedjari H."/>
            <person name="Nordsiek G."/>
            <person name="Novella S."/>
            <person name="de Pablos B."/>
            <person name="Perez-Diaz J.-C."/>
            <person name="Purcell R."/>
            <person name="Remmel B."/>
            <person name="Rose M."/>
            <person name="Schlueter T."/>
            <person name="Simoes N."/>
            <person name="Tierrez A."/>
            <person name="Vazquez-Boland J.-A."/>
            <person name="Voss H."/>
            <person name="Wehland J."/>
            <person name="Cossart P."/>
        </authorList>
    </citation>
    <scope>NUCLEOTIDE SEQUENCE [LARGE SCALE GENOMIC DNA]</scope>
    <source>
        <strain>ATCC BAA-680 / CLIP 11262</strain>
    </source>
</reference>
<comment type="cofactor">
    <cofactor evidence="1">
        <name>Zn(2+)</name>
        <dbReference type="ChEBI" id="CHEBI:29105"/>
    </cofactor>
    <text evidence="1">Binds 1 zinc ion.</text>
</comment>
<comment type="subcellular location">
    <subcellularLocation>
        <location evidence="1">Cytoplasm</location>
    </subcellularLocation>
</comment>
<comment type="similarity">
    <text evidence="1">Belongs to the SprT family.</text>
</comment>
<feature type="chain" id="PRO_0000213292" description="Protein SprT-like">
    <location>
        <begin position="1"/>
        <end position="155"/>
    </location>
</feature>
<feature type="domain" description="SprT-like" evidence="1">
    <location>
        <begin position="7"/>
        <end position="145"/>
    </location>
</feature>
<feature type="active site" evidence="1">
    <location>
        <position position="68"/>
    </location>
</feature>
<feature type="binding site" evidence="1">
    <location>
        <position position="67"/>
    </location>
    <ligand>
        <name>Zn(2+)</name>
        <dbReference type="ChEBI" id="CHEBI:29105"/>
    </ligand>
</feature>
<feature type="binding site" evidence="1">
    <location>
        <position position="71"/>
    </location>
    <ligand>
        <name>Zn(2+)</name>
        <dbReference type="ChEBI" id="CHEBI:29105"/>
    </ligand>
</feature>
<gene>
    <name type="ordered locus">lin0898</name>
</gene>
<name>SPRTL_LISIN</name>
<evidence type="ECO:0000255" key="1">
    <source>
        <dbReference type="HAMAP-Rule" id="MF_00745"/>
    </source>
</evidence>
<keyword id="KW-0963">Cytoplasm</keyword>
<keyword id="KW-0479">Metal-binding</keyword>
<keyword id="KW-0862">Zinc</keyword>
<proteinExistence type="inferred from homology"/>
<dbReference type="EMBL" id="AL596166">
    <property type="protein sequence ID" value="CAC96130.1"/>
    <property type="molecule type" value="Genomic_DNA"/>
</dbReference>
<dbReference type="PIR" id="AB1545">
    <property type="entry name" value="AB1545"/>
</dbReference>
<dbReference type="RefSeq" id="WP_003761323.1">
    <property type="nucleotide sequence ID" value="NC_003212.1"/>
</dbReference>
<dbReference type="STRING" id="272626.gene:17565225"/>
<dbReference type="GeneID" id="93234341"/>
<dbReference type="KEGG" id="lin:lin0898"/>
<dbReference type="eggNOG" id="COG3091">
    <property type="taxonomic scope" value="Bacteria"/>
</dbReference>
<dbReference type="HOGENOM" id="CLU_123820_0_0_9"/>
<dbReference type="OrthoDB" id="9799909at2"/>
<dbReference type="Proteomes" id="UP000002513">
    <property type="component" value="Chromosome"/>
</dbReference>
<dbReference type="GO" id="GO:0005737">
    <property type="term" value="C:cytoplasm"/>
    <property type="evidence" value="ECO:0007669"/>
    <property type="project" value="UniProtKB-SubCell"/>
</dbReference>
<dbReference type="GO" id="GO:0008270">
    <property type="term" value="F:zinc ion binding"/>
    <property type="evidence" value="ECO:0007669"/>
    <property type="project" value="UniProtKB-UniRule"/>
</dbReference>
<dbReference type="GO" id="GO:0006950">
    <property type="term" value="P:response to stress"/>
    <property type="evidence" value="ECO:0007669"/>
    <property type="project" value="UniProtKB-ARBA"/>
</dbReference>
<dbReference type="HAMAP" id="MF_00745">
    <property type="entry name" value="SprT_like"/>
    <property type="match status" value="1"/>
</dbReference>
<dbReference type="InterPro" id="IPR006640">
    <property type="entry name" value="SprT-like_domain"/>
</dbReference>
<dbReference type="InterPro" id="IPR035240">
    <property type="entry name" value="SprT_Zn_ribbon"/>
</dbReference>
<dbReference type="InterPro" id="IPR023524">
    <property type="entry name" value="Uncharacterised_SprT-like"/>
</dbReference>
<dbReference type="NCBIfam" id="NF003339">
    <property type="entry name" value="PRK04351.1"/>
    <property type="match status" value="1"/>
</dbReference>
<dbReference type="Pfam" id="PF10263">
    <property type="entry name" value="SprT-like"/>
    <property type="match status" value="1"/>
</dbReference>
<dbReference type="Pfam" id="PF17283">
    <property type="entry name" value="Zn_ribbon_SprT"/>
    <property type="match status" value="1"/>
</dbReference>
<dbReference type="SMART" id="SM00731">
    <property type="entry name" value="SprT"/>
    <property type="match status" value="1"/>
</dbReference>
<sequence>MNQTELQQHMEEVSLQFFQKEFRHQAVFNTRLRTTGGRYLLKSHNIEMNPKYLENFGLEYFFGIMKHELCHYHLHLEKKGYQHRDKDFRELLKKVDAPRFCAAIPREITMHEYTCKSCGKSFLRQRRFNVNRYRCGSCGGRLKQTGSKKVYTESP</sequence>
<organism>
    <name type="scientific">Listeria innocua serovar 6a (strain ATCC BAA-680 / CLIP 11262)</name>
    <dbReference type="NCBI Taxonomy" id="272626"/>
    <lineage>
        <taxon>Bacteria</taxon>
        <taxon>Bacillati</taxon>
        <taxon>Bacillota</taxon>
        <taxon>Bacilli</taxon>
        <taxon>Bacillales</taxon>
        <taxon>Listeriaceae</taxon>
        <taxon>Listeria</taxon>
    </lineage>
</organism>
<accession>Q92DB7</accession>